<name>RNH_POLSJ</name>
<feature type="chain" id="PRO_0000332647" description="Ribonuclease H">
    <location>
        <begin position="1"/>
        <end position="159"/>
    </location>
</feature>
<feature type="domain" description="RNase H type-1" evidence="2">
    <location>
        <begin position="10"/>
        <end position="153"/>
    </location>
</feature>
<feature type="binding site" evidence="1">
    <location>
        <position position="19"/>
    </location>
    <ligand>
        <name>Mg(2+)</name>
        <dbReference type="ChEBI" id="CHEBI:18420"/>
        <label>1</label>
    </ligand>
</feature>
<feature type="binding site" evidence="1">
    <location>
        <position position="19"/>
    </location>
    <ligand>
        <name>Mg(2+)</name>
        <dbReference type="ChEBI" id="CHEBI:18420"/>
        <label>2</label>
    </ligand>
</feature>
<feature type="binding site" evidence="1">
    <location>
        <position position="57"/>
    </location>
    <ligand>
        <name>Mg(2+)</name>
        <dbReference type="ChEBI" id="CHEBI:18420"/>
        <label>1</label>
    </ligand>
</feature>
<feature type="binding site" evidence="1">
    <location>
        <position position="79"/>
    </location>
    <ligand>
        <name>Mg(2+)</name>
        <dbReference type="ChEBI" id="CHEBI:18420"/>
        <label>1</label>
    </ligand>
</feature>
<feature type="binding site" evidence="1">
    <location>
        <position position="145"/>
    </location>
    <ligand>
        <name>Mg(2+)</name>
        <dbReference type="ChEBI" id="CHEBI:18420"/>
        <label>2</label>
    </ligand>
</feature>
<comment type="function">
    <text evidence="1">Endonuclease that specifically degrades the RNA of RNA-DNA hybrids.</text>
</comment>
<comment type="catalytic activity">
    <reaction evidence="1">
        <text>Endonucleolytic cleavage to 5'-phosphomonoester.</text>
        <dbReference type="EC" id="3.1.26.4"/>
    </reaction>
</comment>
<comment type="cofactor">
    <cofactor evidence="1">
        <name>Mg(2+)</name>
        <dbReference type="ChEBI" id="CHEBI:18420"/>
    </cofactor>
    <text evidence="1">Binds 1 Mg(2+) ion per subunit. May bind a second metal ion at a regulatory site, or after substrate binding.</text>
</comment>
<comment type="subunit">
    <text evidence="1">Monomer.</text>
</comment>
<comment type="subcellular location">
    <subcellularLocation>
        <location evidence="1">Cytoplasm</location>
    </subcellularLocation>
</comment>
<comment type="similarity">
    <text evidence="1">Belongs to the RNase H family.</text>
</comment>
<reference key="1">
    <citation type="journal article" date="2008" name="Appl. Environ. Microbiol.">
        <title>The genome of Polaromonas sp. strain JS666: insights into the evolution of a hydrocarbon- and xenobiotic-degrading bacterium, and features of relevance to biotechnology.</title>
        <authorList>
            <person name="Mattes T.E."/>
            <person name="Alexander A.K."/>
            <person name="Richardson P.M."/>
            <person name="Munk A.C."/>
            <person name="Han C.S."/>
            <person name="Stothard P."/>
            <person name="Coleman N.V."/>
        </authorList>
    </citation>
    <scope>NUCLEOTIDE SEQUENCE [LARGE SCALE GENOMIC DNA]</scope>
    <source>
        <strain>JS666 / ATCC BAA-500</strain>
    </source>
</reference>
<sequence length="159" mass="17461">MTDTQAGTTTQTQVVIYTDGACKGNPGPGGWGVLLAMGDTEKELFGGEPVTTNNRMEMTAVIEALAALKRPCRVTLYLDSEYVRKGITEWIHGWKARGWRTAAKAPVKNVDLWQRLDALVTSSGHKIDWRWVKGHNGDPGNERADALANQGVERALGRR</sequence>
<keyword id="KW-0963">Cytoplasm</keyword>
<keyword id="KW-0255">Endonuclease</keyword>
<keyword id="KW-0378">Hydrolase</keyword>
<keyword id="KW-0460">Magnesium</keyword>
<keyword id="KW-0479">Metal-binding</keyword>
<keyword id="KW-0540">Nuclease</keyword>
<keyword id="KW-1185">Reference proteome</keyword>
<gene>
    <name evidence="1" type="primary">rnhA</name>
    <name type="ordered locus">Bpro_2281</name>
</gene>
<evidence type="ECO:0000255" key="1">
    <source>
        <dbReference type="HAMAP-Rule" id="MF_00042"/>
    </source>
</evidence>
<evidence type="ECO:0000255" key="2">
    <source>
        <dbReference type="PROSITE-ProRule" id="PRU00408"/>
    </source>
</evidence>
<accession>Q12B88</accession>
<dbReference type="EC" id="3.1.26.4" evidence="1"/>
<dbReference type="EMBL" id="CP000316">
    <property type="protein sequence ID" value="ABE44204.1"/>
    <property type="molecule type" value="Genomic_DNA"/>
</dbReference>
<dbReference type="RefSeq" id="WP_011483202.1">
    <property type="nucleotide sequence ID" value="NC_007948.1"/>
</dbReference>
<dbReference type="SMR" id="Q12B88"/>
<dbReference type="STRING" id="296591.Bpro_2281"/>
<dbReference type="KEGG" id="pol:Bpro_2281"/>
<dbReference type="eggNOG" id="COG0328">
    <property type="taxonomic scope" value="Bacteria"/>
</dbReference>
<dbReference type="HOGENOM" id="CLU_030894_6_0_4"/>
<dbReference type="OrthoDB" id="7845843at2"/>
<dbReference type="Proteomes" id="UP000001983">
    <property type="component" value="Chromosome"/>
</dbReference>
<dbReference type="GO" id="GO:0005737">
    <property type="term" value="C:cytoplasm"/>
    <property type="evidence" value="ECO:0007669"/>
    <property type="project" value="UniProtKB-SubCell"/>
</dbReference>
<dbReference type="GO" id="GO:0000287">
    <property type="term" value="F:magnesium ion binding"/>
    <property type="evidence" value="ECO:0007669"/>
    <property type="project" value="UniProtKB-UniRule"/>
</dbReference>
<dbReference type="GO" id="GO:0003676">
    <property type="term" value="F:nucleic acid binding"/>
    <property type="evidence" value="ECO:0007669"/>
    <property type="project" value="InterPro"/>
</dbReference>
<dbReference type="GO" id="GO:0004523">
    <property type="term" value="F:RNA-DNA hybrid ribonuclease activity"/>
    <property type="evidence" value="ECO:0007669"/>
    <property type="project" value="UniProtKB-UniRule"/>
</dbReference>
<dbReference type="GO" id="GO:0043137">
    <property type="term" value="P:DNA replication, removal of RNA primer"/>
    <property type="evidence" value="ECO:0007669"/>
    <property type="project" value="TreeGrafter"/>
</dbReference>
<dbReference type="CDD" id="cd09278">
    <property type="entry name" value="RNase_HI_prokaryote_like"/>
    <property type="match status" value="1"/>
</dbReference>
<dbReference type="FunFam" id="3.30.420.10:FF:000089">
    <property type="entry name" value="Ribonuclease H"/>
    <property type="match status" value="1"/>
</dbReference>
<dbReference type="Gene3D" id="3.30.420.10">
    <property type="entry name" value="Ribonuclease H-like superfamily/Ribonuclease H"/>
    <property type="match status" value="1"/>
</dbReference>
<dbReference type="HAMAP" id="MF_00042">
    <property type="entry name" value="RNase_H"/>
    <property type="match status" value="1"/>
</dbReference>
<dbReference type="InterPro" id="IPR050092">
    <property type="entry name" value="RNase_H"/>
</dbReference>
<dbReference type="InterPro" id="IPR012337">
    <property type="entry name" value="RNaseH-like_sf"/>
</dbReference>
<dbReference type="InterPro" id="IPR002156">
    <property type="entry name" value="RNaseH_domain"/>
</dbReference>
<dbReference type="InterPro" id="IPR036397">
    <property type="entry name" value="RNaseH_sf"/>
</dbReference>
<dbReference type="InterPro" id="IPR022892">
    <property type="entry name" value="RNaseHI"/>
</dbReference>
<dbReference type="NCBIfam" id="NF001236">
    <property type="entry name" value="PRK00203.1"/>
    <property type="match status" value="1"/>
</dbReference>
<dbReference type="PANTHER" id="PTHR10642">
    <property type="entry name" value="RIBONUCLEASE H1"/>
    <property type="match status" value="1"/>
</dbReference>
<dbReference type="PANTHER" id="PTHR10642:SF26">
    <property type="entry name" value="RIBONUCLEASE H1"/>
    <property type="match status" value="1"/>
</dbReference>
<dbReference type="Pfam" id="PF00075">
    <property type="entry name" value="RNase_H"/>
    <property type="match status" value="1"/>
</dbReference>
<dbReference type="SUPFAM" id="SSF53098">
    <property type="entry name" value="Ribonuclease H-like"/>
    <property type="match status" value="1"/>
</dbReference>
<dbReference type="PROSITE" id="PS50879">
    <property type="entry name" value="RNASE_H_1"/>
    <property type="match status" value="1"/>
</dbReference>
<protein>
    <recommendedName>
        <fullName evidence="1">Ribonuclease H</fullName>
        <shortName evidence="1">RNase H</shortName>
        <ecNumber evidence="1">3.1.26.4</ecNumber>
    </recommendedName>
</protein>
<organism>
    <name type="scientific">Polaromonas sp. (strain JS666 / ATCC BAA-500)</name>
    <dbReference type="NCBI Taxonomy" id="296591"/>
    <lineage>
        <taxon>Bacteria</taxon>
        <taxon>Pseudomonadati</taxon>
        <taxon>Pseudomonadota</taxon>
        <taxon>Betaproteobacteria</taxon>
        <taxon>Burkholderiales</taxon>
        <taxon>Comamonadaceae</taxon>
        <taxon>Polaromonas</taxon>
    </lineage>
</organism>
<proteinExistence type="inferred from homology"/>